<name>RL27_XYLFM</name>
<reference key="1">
    <citation type="journal article" date="2010" name="J. Bacteriol.">
        <title>Whole genome sequences of two Xylella fastidiosa strains (M12 and M23) causing almond leaf scorch disease in California.</title>
        <authorList>
            <person name="Chen J."/>
            <person name="Xie G."/>
            <person name="Han S."/>
            <person name="Chertkov O."/>
            <person name="Sims D."/>
            <person name="Civerolo E.L."/>
        </authorList>
    </citation>
    <scope>NUCLEOTIDE SEQUENCE [LARGE SCALE GENOMIC DNA]</scope>
    <source>
        <strain>M12</strain>
    </source>
</reference>
<protein>
    <recommendedName>
        <fullName evidence="1">Large ribosomal subunit protein bL27</fullName>
    </recommendedName>
    <alternativeName>
        <fullName evidence="2">50S ribosomal protein L27</fullName>
    </alternativeName>
</protein>
<sequence length="85" mass="9069">MAHKKGVGSSRNGRDSNPKYLGVKLFGGQAIEAGNIIIRQRGTQFHAGDGVGLGRDHTLFALVNGTVEFSIKGPKKRRTVNVIPA</sequence>
<dbReference type="EMBL" id="CP000941">
    <property type="protein sequence ID" value="ACA12493.1"/>
    <property type="molecule type" value="Genomic_DNA"/>
</dbReference>
<dbReference type="RefSeq" id="WP_004085949.1">
    <property type="nucleotide sequence ID" value="NC_010513.1"/>
</dbReference>
<dbReference type="SMR" id="B0U3R4"/>
<dbReference type="GeneID" id="93905263"/>
<dbReference type="KEGG" id="xfm:Xfasm12_1583"/>
<dbReference type="HOGENOM" id="CLU_095424_4_0_6"/>
<dbReference type="GO" id="GO:0022625">
    <property type="term" value="C:cytosolic large ribosomal subunit"/>
    <property type="evidence" value="ECO:0007669"/>
    <property type="project" value="TreeGrafter"/>
</dbReference>
<dbReference type="GO" id="GO:0003735">
    <property type="term" value="F:structural constituent of ribosome"/>
    <property type="evidence" value="ECO:0007669"/>
    <property type="project" value="InterPro"/>
</dbReference>
<dbReference type="GO" id="GO:0006412">
    <property type="term" value="P:translation"/>
    <property type="evidence" value="ECO:0007669"/>
    <property type="project" value="UniProtKB-UniRule"/>
</dbReference>
<dbReference type="FunFam" id="2.40.50.100:FF:000020">
    <property type="entry name" value="50S ribosomal protein L27"/>
    <property type="match status" value="1"/>
</dbReference>
<dbReference type="Gene3D" id="2.40.50.100">
    <property type="match status" value="1"/>
</dbReference>
<dbReference type="HAMAP" id="MF_00539">
    <property type="entry name" value="Ribosomal_bL27"/>
    <property type="match status" value="1"/>
</dbReference>
<dbReference type="InterPro" id="IPR001684">
    <property type="entry name" value="Ribosomal_bL27"/>
</dbReference>
<dbReference type="InterPro" id="IPR018261">
    <property type="entry name" value="Ribosomal_bL27_CS"/>
</dbReference>
<dbReference type="NCBIfam" id="TIGR00062">
    <property type="entry name" value="L27"/>
    <property type="match status" value="1"/>
</dbReference>
<dbReference type="PANTHER" id="PTHR15893:SF0">
    <property type="entry name" value="LARGE RIBOSOMAL SUBUNIT PROTEIN BL27M"/>
    <property type="match status" value="1"/>
</dbReference>
<dbReference type="PANTHER" id="PTHR15893">
    <property type="entry name" value="RIBOSOMAL PROTEIN L27"/>
    <property type="match status" value="1"/>
</dbReference>
<dbReference type="Pfam" id="PF01016">
    <property type="entry name" value="Ribosomal_L27"/>
    <property type="match status" value="1"/>
</dbReference>
<dbReference type="PRINTS" id="PR00063">
    <property type="entry name" value="RIBOSOMALL27"/>
</dbReference>
<dbReference type="SUPFAM" id="SSF110324">
    <property type="entry name" value="Ribosomal L27 protein-like"/>
    <property type="match status" value="1"/>
</dbReference>
<dbReference type="PROSITE" id="PS00831">
    <property type="entry name" value="RIBOSOMAL_L27"/>
    <property type="match status" value="1"/>
</dbReference>
<keyword id="KW-0687">Ribonucleoprotein</keyword>
<keyword id="KW-0689">Ribosomal protein</keyword>
<accession>B0U3R4</accession>
<gene>
    <name evidence="1" type="primary">rpmA</name>
    <name type="ordered locus">Xfasm12_1583</name>
</gene>
<organism>
    <name type="scientific">Xylella fastidiosa (strain M12)</name>
    <dbReference type="NCBI Taxonomy" id="405440"/>
    <lineage>
        <taxon>Bacteria</taxon>
        <taxon>Pseudomonadati</taxon>
        <taxon>Pseudomonadota</taxon>
        <taxon>Gammaproteobacteria</taxon>
        <taxon>Lysobacterales</taxon>
        <taxon>Lysobacteraceae</taxon>
        <taxon>Xylella</taxon>
    </lineage>
</organism>
<proteinExistence type="inferred from homology"/>
<evidence type="ECO:0000255" key="1">
    <source>
        <dbReference type="HAMAP-Rule" id="MF_00539"/>
    </source>
</evidence>
<evidence type="ECO:0000305" key="2"/>
<comment type="similarity">
    <text evidence="1">Belongs to the bacterial ribosomal protein bL27 family.</text>
</comment>
<feature type="chain" id="PRO_1000128830" description="Large ribosomal subunit protein bL27">
    <location>
        <begin position="1"/>
        <end position="85"/>
    </location>
</feature>